<gene>
    <name type="primary">nkain3</name>
</gene>
<keyword id="KW-1003">Cell membrane</keyword>
<keyword id="KW-0472">Membrane</keyword>
<keyword id="KW-1185">Reference proteome</keyword>
<keyword id="KW-0812">Transmembrane</keyword>
<keyword id="KW-1133">Transmembrane helix</keyword>
<feature type="chain" id="PRO_0000310469" description="Sodium/potassium-transporting ATPase subunit beta-1-interacting protein 3">
    <location>
        <begin position="1"/>
        <end position="179"/>
    </location>
</feature>
<feature type="transmembrane region" description="Helical" evidence="2">
    <location>
        <begin position="5"/>
        <end position="22"/>
    </location>
</feature>
<feature type="transmembrane region" description="Helical" evidence="2">
    <location>
        <begin position="35"/>
        <end position="55"/>
    </location>
</feature>
<feature type="transmembrane region" description="Helical" evidence="2">
    <location>
        <begin position="62"/>
        <end position="82"/>
    </location>
</feature>
<feature type="transmembrane region" description="Helical" evidence="2">
    <location>
        <begin position="151"/>
        <end position="171"/>
    </location>
</feature>
<proteinExistence type="evidence at transcript level"/>
<name>NKAI3_XENLA</name>
<protein>
    <recommendedName>
        <fullName>Sodium/potassium-transporting ATPase subunit beta-1-interacting protein 3</fullName>
        <shortName>Na(+)/K(+)-transporting ATPase subunit beta-1-interacting protein 3</shortName>
    </recommendedName>
</protein>
<accession>Q66KZ9</accession>
<dbReference type="EMBL" id="BC078500">
    <property type="protein sequence ID" value="AAH78500.1"/>
    <property type="molecule type" value="mRNA"/>
</dbReference>
<dbReference type="RefSeq" id="NP_001087277.1">
    <property type="nucleotide sequence ID" value="NM_001093808.1"/>
</dbReference>
<dbReference type="SMR" id="Q66KZ9"/>
<dbReference type="DNASU" id="447099"/>
<dbReference type="GeneID" id="447099"/>
<dbReference type="KEGG" id="xla:447099"/>
<dbReference type="AGR" id="Xenbase:XB-GENE-5816267"/>
<dbReference type="CTD" id="447099"/>
<dbReference type="Xenbase" id="XB-GENE-5816267">
    <property type="gene designation" value="nkain3.S"/>
</dbReference>
<dbReference type="OrthoDB" id="10050321at2759"/>
<dbReference type="Proteomes" id="UP000186698">
    <property type="component" value="Chromosome 6S"/>
</dbReference>
<dbReference type="Bgee" id="447099">
    <property type="expression patterns" value="Expressed in brain and 3 other cell types or tissues"/>
</dbReference>
<dbReference type="GO" id="GO:0005886">
    <property type="term" value="C:plasma membrane"/>
    <property type="evidence" value="ECO:0007669"/>
    <property type="project" value="UniProtKB-SubCell"/>
</dbReference>
<dbReference type="GO" id="GO:0002028">
    <property type="term" value="P:regulation of sodium ion transport"/>
    <property type="evidence" value="ECO:0000318"/>
    <property type="project" value="GO_Central"/>
</dbReference>
<dbReference type="InterPro" id="IPR008516">
    <property type="entry name" value="Na/K-Atpase_Interacting"/>
</dbReference>
<dbReference type="PANTHER" id="PTHR13084:SF2">
    <property type="entry name" value="SODIUM_POTASSIUM-TRANSPORTING ATPASE SUBUNIT BETA-1-INTERACTING PROTEIN 3"/>
    <property type="match status" value="1"/>
</dbReference>
<dbReference type="PANTHER" id="PTHR13084">
    <property type="entry name" value="T-CELL LYMPHOMA BREAKPOINT-ASSOCIATED TARGET 1-RELATED"/>
    <property type="match status" value="1"/>
</dbReference>
<dbReference type="Pfam" id="PF05640">
    <property type="entry name" value="NKAIN"/>
    <property type="match status" value="1"/>
</dbReference>
<reference key="1">
    <citation type="submission" date="2004-07" db="EMBL/GenBank/DDBJ databases">
        <authorList>
            <consortium name="NIH - Xenopus Gene Collection (XGC) project"/>
        </authorList>
    </citation>
    <scope>NUCLEOTIDE SEQUENCE [LARGE SCALE MRNA]</scope>
</reference>
<sequence>MGCCTGRCTLVFICTLQMLVALERQIFDFLGYQWAPILGNFLHIIVVILGLFGTIQYRPRYIVAYTIWTAFWVAWNVFIICFYLEVGGLSKDTDLMTFNISIHRSWWREHGPGCVWRLVPAPPSKNLGDHSFISVTGCIIEYQYLEVIHSAVQILLSLIGFVYACYVISVITDEEDSST</sequence>
<evidence type="ECO:0000250" key="1"/>
<evidence type="ECO:0000255" key="2"/>
<evidence type="ECO:0000305" key="3"/>
<comment type="subunit">
    <text evidence="1">Interacts with atp1b1 C-terminus.</text>
</comment>
<comment type="subcellular location">
    <subcellularLocation>
        <location evidence="3">Cell membrane</location>
        <topology evidence="3">Multi-pass membrane protein</topology>
    </subcellularLocation>
</comment>
<comment type="similarity">
    <text evidence="3">Belongs to the NKAIN family.</text>
</comment>
<organism>
    <name type="scientific">Xenopus laevis</name>
    <name type="common">African clawed frog</name>
    <dbReference type="NCBI Taxonomy" id="8355"/>
    <lineage>
        <taxon>Eukaryota</taxon>
        <taxon>Metazoa</taxon>
        <taxon>Chordata</taxon>
        <taxon>Craniata</taxon>
        <taxon>Vertebrata</taxon>
        <taxon>Euteleostomi</taxon>
        <taxon>Amphibia</taxon>
        <taxon>Batrachia</taxon>
        <taxon>Anura</taxon>
        <taxon>Pipoidea</taxon>
        <taxon>Pipidae</taxon>
        <taxon>Xenopodinae</taxon>
        <taxon>Xenopus</taxon>
        <taxon>Xenopus</taxon>
    </lineage>
</organism>